<comment type="function">
    <text evidence="2">E3 ubiquitin-protein ligase that specifically mediates the formation of 'Lys-6'-linked polyubiquitin chains and plays a central role in DNA repair by facilitating cellular responses to DNA damage. It is unclear whether it also mediates the formation of other types of polyubiquitin chains. The BRCA1-BARD1 heterodimer coordinates a diverse range of cellular pathways such as DNA damage repair, ubiquitination and transcriptional regulation to maintain genomic stability. Regulates centrosomal microtubule nucleation. Required for appropriate cell cycle arrests after ionizing irradiation in both the S-phase and the G2 phase of the cell cycle. Required for FANCD2 targeting to sites of DNA damage. Inhibits lipid synthesis by binding to inactive phosphorylated ACACA and preventing its dephosphorylation. Contributes to homologous recombination repair (HRR) via its direct interaction with PALB2, fine-tunes recombinational repair partly through its modulatory role in the PALB2-dependent loading of BRCA2-RAD51 repair machinery at DNA breaks. Component of the BRCA1-RBBP8 complex which regulates CHEK1 activation and controls cell cycle G2/M checkpoints on DNA damage via BRCA1-mediated ubiquitination of RBBP8. Acts as a transcriptional activator.</text>
</comment>
<comment type="catalytic activity">
    <reaction evidence="2">
        <text>S-ubiquitinyl-[E2 ubiquitin-conjugating enzyme]-L-cysteine + [acceptor protein]-L-lysine = [E2 ubiquitin-conjugating enzyme]-L-cysteine + N(6)-ubiquitinyl-[acceptor protein]-L-lysine.</text>
        <dbReference type="EC" id="2.3.2.27"/>
    </reaction>
</comment>
<comment type="pathway">
    <text>Protein modification; protein ubiquitination.</text>
</comment>
<comment type="subunit">
    <text evidence="2 7">Heterodimer with BARD1. Part of the BRCA1-associated genome surveillance complex (BASC), which contains BRCA1, MSH2, MSH6, MLH1, ATM, BLM, PMS2 and the MRE11-RAD50-NBN protein (MRN) complex. This association could be a dynamic process changing throughout the cell cycle and within subnuclear domains. Component of the BRCA1-A complex, at least composed of BRCA1, BARD1, UIMC1/RAP80, ABRAXAS1, BRCC3/BRCC36, BABAM2 and BABAM1/NBA1. Interacts (via the BRCT domains) with ABRAXAS1 (phosphorylated form); this is important for recruitment to sites of DNA damage. Can form a heterotetramer with two molecules of ABRAXAS1 (phosphorylated form). Component of the BRCA1-RBBP8 complex. Interacts (via the BRCT domains) with RBBP8 ('Ser-327' phosphorylated form); the interaction ubiquitinates RBBP8, regulates CHEK1 activation, and involves RBBP8 in BRCA1-dependent G2/M checkpoint control on DNA damage. Associates with RNA polymerase II holoenzyme. Interacts with SMC1A, NELFB, DCLRE1C, CLSPN. CHEK1, CHEK2, BAP1, BRCC3, UBXN1 and PCLAF. Interacts (via BRCT domains) with BRIP1 (phosphorylated form). Interacts with FANCD2 (ubiquitinated form). Interacts with H2AX (phosphorylated on 'Ser-140'). Interacts (via the BRCT domains) with ACACA (phosphorylated form); the interaction prevents dephosphorylation of ACACA. Part of a BRCA complex containing BRCA1, BRCA2 and PALB2. Interacts directly with PALB2; the interaction is essential for its function in HRR. Interacts directly with BRCA2; the interaction occurs only in the presence of PALB2 which serves as the bridging protein. Interacts (via the BRCT domains) with LMO4; the interaction represses the transcriptional activity of BRCA1. Interacts (via the BRCT domains) with CCAR2 (via N-terminus); the interaction represses the transcriptional activator activity of BRCA1 (By similarity). Interacts with EXD2 (By similarity). Interacts (via C-terminus) with DHX9; this interaction is direct and links BRCA1 to the RNA polymerase II holoenzyme (By similarity). Interacts with DNA helicase ZGRF1; the interaction is increased following DNA damage induction (By similarity).</text>
</comment>
<comment type="subcellular location">
    <subcellularLocation>
        <location evidence="2">Nucleus</location>
    </subcellularLocation>
    <subcellularLocation>
        <location evidence="3">Chromosome</location>
    </subcellularLocation>
    <subcellularLocation>
        <location evidence="2">Cytoplasm</location>
    </subcellularLocation>
    <text evidence="2">Localizes at sites of DNA damage at double-strand breaks (DSBs); recruitment to DNA damage sites is mediated by the BRCA1-A complex. Translocated to the cytoplasm during UV-induced apoptosis.</text>
</comment>
<comment type="domain">
    <text evidence="2">The RING-type zinc finger domain interacts with BAP1.</text>
</comment>
<comment type="domain">
    <text evidence="2">The BRCT domains recognize and bind phosphorylated pSXXF motif on proteins. The interaction with the phosphorylated pSXXF motif of ABRAXAS1, recruits BRCA1 at DNA damage sites.</text>
</comment>
<comment type="PTM">
    <text evidence="2">Phosphorylated in response to IR, UV, and various stimuli that cause checkpoint activation, probably by ATM or ATR. Phosphorylation at Ser-982 by CHEK2 regulates mitotic spindle assembly. Phosphorylation by AURKA regulates centrosomal microtubule nucleation.</text>
</comment>
<comment type="PTM">
    <text evidence="2">Autoubiquitinated, undergoes 'Lys-6'-linked polyubiquitination. 'Lys-6'-linked polyubiquitination does not promote degradation.</text>
</comment>
<accession>Q864U1</accession>
<feature type="chain" id="PRO_0000055827" description="Breast cancer type 1 susceptibility protein homolog">
    <location>
        <begin position="1"/>
        <end position="1849"/>
    </location>
</feature>
<feature type="domain" description="BRCT 1" evidence="4">
    <location>
        <begin position="1642"/>
        <end position="1729"/>
    </location>
</feature>
<feature type="domain" description="BRCT 2" evidence="4">
    <location>
        <begin position="1749"/>
        <end position="1848"/>
    </location>
</feature>
<feature type="zinc finger region" description="RING-type" evidence="5">
    <location>
        <begin position="24"/>
        <end position="65"/>
    </location>
</feature>
<feature type="region of interest" description="Disordered" evidence="6">
    <location>
        <begin position="530"/>
        <end position="558"/>
    </location>
</feature>
<feature type="region of interest" description="Disordered" evidence="6">
    <location>
        <begin position="620"/>
        <end position="662"/>
    </location>
</feature>
<feature type="region of interest" description="Disordered" evidence="6">
    <location>
        <begin position="882"/>
        <end position="912"/>
    </location>
</feature>
<feature type="region of interest" description="Disordered" evidence="6">
    <location>
        <begin position="1036"/>
        <end position="1070"/>
    </location>
</feature>
<feature type="region of interest" description="Disordered" evidence="6">
    <location>
        <begin position="1172"/>
        <end position="1211"/>
    </location>
</feature>
<feature type="region of interest" description="Disordered" evidence="6">
    <location>
        <begin position="1321"/>
        <end position="1389"/>
    </location>
</feature>
<feature type="region of interest" description="Interaction with PALB2" evidence="1">
    <location>
        <begin position="1392"/>
        <end position="1419"/>
    </location>
</feature>
<feature type="region of interest" description="Disordered" evidence="6">
    <location>
        <begin position="1412"/>
        <end position="1433"/>
    </location>
</feature>
<feature type="region of interest" description="Disordered" evidence="6">
    <location>
        <begin position="1452"/>
        <end position="1493"/>
    </location>
</feature>
<feature type="region of interest" description="Disordered" evidence="6">
    <location>
        <begin position="1562"/>
        <end position="1590"/>
    </location>
</feature>
<feature type="region of interest" description="Disordered" evidence="6">
    <location>
        <begin position="1621"/>
        <end position="1640"/>
    </location>
</feature>
<feature type="compositionally biased region" description="Basic and acidic residues" evidence="6">
    <location>
        <begin position="530"/>
        <end position="542"/>
    </location>
</feature>
<feature type="compositionally biased region" description="Basic and acidic residues" evidence="6">
    <location>
        <begin position="888"/>
        <end position="910"/>
    </location>
</feature>
<feature type="compositionally biased region" description="Low complexity" evidence="6">
    <location>
        <begin position="1036"/>
        <end position="1061"/>
    </location>
</feature>
<feature type="compositionally biased region" description="Acidic residues" evidence="6">
    <location>
        <begin position="1336"/>
        <end position="1360"/>
    </location>
</feature>
<feature type="compositionally biased region" description="Polar residues" evidence="6">
    <location>
        <begin position="1370"/>
        <end position="1389"/>
    </location>
</feature>
<feature type="compositionally biased region" description="Polar residues" evidence="6">
    <location>
        <begin position="1418"/>
        <end position="1429"/>
    </location>
</feature>
<feature type="compositionally biased region" description="Basic and acidic residues" evidence="6">
    <location>
        <begin position="1566"/>
        <end position="1582"/>
    </location>
</feature>
<feature type="compositionally biased region" description="Basic and acidic residues" evidence="6">
    <location>
        <begin position="1621"/>
        <end position="1631"/>
    </location>
</feature>
<feature type="modified residue" description="N-acetylmethionine" evidence="2">
    <location>
        <position position="1"/>
    </location>
</feature>
<feature type="modified residue" description="Phosphoserine" evidence="2">
    <location>
        <position position="114"/>
    </location>
</feature>
<feature type="modified residue" description="Phosphoserine" evidence="2">
    <location>
        <position position="395"/>
    </location>
</feature>
<feature type="modified residue" description="Phosphoserine" evidence="2">
    <location>
        <position position="398"/>
    </location>
</feature>
<feature type="modified residue" description="Phosphoserine" evidence="2">
    <location>
        <position position="423"/>
    </location>
</feature>
<feature type="modified residue" description="Phosphoserine" evidence="2">
    <location>
        <position position="434"/>
    </location>
</feature>
<feature type="modified residue" description="Phosphoserine" evidence="2">
    <location>
        <position position="691"/>
    </location>
</feature>
<feature type="modified residue" description="Phosphoserine" evidence="3">
    <location>
        <position position="711"/>
    </location>
</feature>
<feature type="modified residue" description="Phosphoserine" evidence="3">
    <location>
        <position position="720"/>
    </location>
</feature>
<feature type="modified residue" description="Phosphoserine; by CHEK2" evidence="2">
    <location>
        <position position="982"/>
    </location>
</feature>
<feature type="modified residue" description="Phosphoserine" evidence="2">
    <location>
        <position position="1002"/>
    </location>
</feature>
<feature type="modified residue" description="Phosphoserine" evidence="2">
    <location>
        <position position="1138"/>
    </location>
</feature>
<feature type="modified residue" description="Phosphoserine" evidence="2">
    <location>
        <position position="1184"/>
    </location>
</feature>
<feature type="modified residue" description="Phosphoserine" evidence="2">
    <location>
        <position position="1211"/>
    </location>
</feature>
<feature type="modified residue" description="Phosphoserine" evidence="2">
    <location>
        <position position="1212"/>
    </location>
</feature>
<feature type="modified residue" description="Phosphoserine" evidence="2">
    <location>
        <position position="1274"/>
    </location>
</feature>
<feature type="modified residue" description="Phosphoserine" evidence="2">
    <location>
        <position position="1323"/>
    </location>
</feature>
<feature type="modified residue" description="Phosphoserine" evidence="2">
    <location>
        <position position="1330"/>
    </location>
</feature>
<feature type="modified residue" description="Phosphoserine" evidence="2">
    <location>
        <position position="1336"/>
    </location>
</feature>
<feature type="modified residue" description="Phosphoserine" evidence="2">
    <location>
        <position position="1382"/>
    </location>
</feature>
<feature type="modified residue" description="Phosphothreonine" evidence="2">
    <location>
        <position position="1389"/>
    </location>
</feature>
<feature type="modified residue" description="Phosphoserine" evidence="2">
    <location>
        <position position="1418"/>
    </location>
</feature>
<feature type="modified residue" description="Phosphoserine" evidence="2">
    <location>
        <position position="1452"/>
    </location>
</feature>
<feature type="modified residue" description="Phosphoserine" evidence="2">
    <location>
        <position position="1518"/>
    </location>
</feature>
<feature type="cross-link" description="Glycyl lysine isopeptide (Lys-Gly) (interchain with G-Cter in SUMO2)" evidence="2">
    <location>
        <position position="301"/>
    </location>
</feature>
<feature type="cross-link" description="Glycyl lysine isopeptide (Lys-Gly) (interchain with G-Cter in SUMO2)" evidence="2">
    <location>
        <position position="339"/>
    </location>
</feature>
<feature type="cross-link" description="Glycyl lysine isopeptide (Lys-Gly) (interchain with G-Cter in SUMO2)" evidence="2">
    <location>
        <position position="457"/>
    </location>
</feature>
<feature type="cross-link" description="Glycyl lysine isopeptide (Lys-Gly) (interchain with G-Cter in SUMO2)" evidence="2">
    <location>
        <position position="517"/>
    </location>
</feature>
<feature type="cross-link" description="Glycyl lysine isopeptide (Lys-Gly) (interchain with G-Cter in SUMO2)" evidence="2">
    <location>
        <position position="981"/>
    </location>
</feature>
<feature type="cross-link" description="Glycyl lysine isopeptide (Lys-Gly) (interchain with G-Cter in SUMO2)" evidence="2">
    <location>
        <position position="1073"/>
    </location>
</feature>
<proteinExistence type="evidence at protein level"/>
<protein>
    <recommendedName>
        <fullName>Breast cancer type 1 susceptibility protein homolog</fullName>
        <ecNumber evidence="2">2.3.2.27</ecNumber>
    </recommendedName>
    <alternativeName>
        <fullName evidence="8">RING-type E3 ubiquitin transferase BRCA1</fullName>
    </alternativeName>
</protein>
<gene>
    <name type="primary">BRCA1</name>
</gene>
<name>BRCA1_BOVIN</name>
<evidence type="ECO:0000250" key="1"/>
<evidence type="ECO:0000250" key="2">
    <source>
        <dbReference type="UniProtKB" id="P38398"/>
    </source>
</evidence>
<evidence type="ECO:0000250" key="3">
    <source>
        <dbReference type="UniProtKB" id="P48754"/>
    </source>
</evidence>
<evidence type="ECO:0000255" key="4">
    <source>
        <dbReference type="PROSITE-ProRule" id="PRU00033"/>
    </source>
</evidence>
<evidence type="ECO:0000255" key="5">
    <source>
        <dbReference type="PROSITE-ProRule" id="PRU00175"/>
    </source>
</evidence>
<evidence type="ECO:0000256" key="6">
    <source>
        <dbReference type="SAM" id="MobiDB-lite"/>
    </source>
</evidence>
<evidence type="ECO:0000269" key="7">
    <source>
    </source>
</evidence>
<evidence type="ECO:0000305" key="8"/>
<organism>
    <name type="scientific">Bos taurus</name>
    <name type="common">Bovine</name>
    <dbReference type="NCBI Taxonomy" id="9913"/>
    <lineage>
        <taxon>Eukaryota</taxon>
        <taxon>Metazoa</taxon>
        <taxon>Chordata</taxon>
        <taxon>Craniata</taxon>
        <taxon>Vertebrata</taxon>
        <taxon>Euteleostomi</taxon>
        <taxon>Mammalia</taxon>
        <taxon>Eutheria</taxon>
        <taxon>Laurasiatheria</taxon>
        <taxon>Artiodactyla</taxon>
        <taxon>Ruminantia</taxon>
        <taxon>Pecora</taxon>
        <taxon>Bovidae</taxon>
        <taxon>Bovinae</taxon>
        <taxon>Bos</taxon>
    </lineage>
</organism>
<dbReference type="EC" id="2.3.2.27" evidence="2"/>
<dbReference type="EMBL" id="AY077732">
    <property type="protein sequence ID" value="AAL76094.1"/>
    <property type="molecule type" value="mRNA"/>
</dbReference>
<dbReference type="RefSeq" id="NP_848668.1">
    <property type="nucleotide sequence ID" value="NM_178573.1"/>
</dbReference>
<dbReference type="SMR" id="Q864U1"/>
<dbReference type="BioGRID" id="160259">
    <property type="interactions" value="2"/>
</dbReference>
<dbReference type="FunCoup" id="Q864U1">
    <property type="interactions" value="997"/>
</dbReference>
<dbReference type="STRING" id="9913.ENSBTAP00000011616"/>
<dbReference type="PaxDb" id="9913-ENSBTAP00000011616"/>
<dbReference type="GeneID" id="353120"/>
<dbReference type="KEGG" id="bta:353120"/>
<dbReference type="CTD" id="672"/>
<dbReference type="eggNOG" id="KOG4362">
    <property type="taxonomic scope" value="Eukaryota"/>
</dbReference>
<dbReference type="InParanoid" id="Q864U1"/>
<dbReference type="OrthoDB" id="6105938at2759"/>
<dbReference type="UniPathway" id="UPA00143"/>
<dbReference type="Proteomes" id="UP000009136">
    <property type="component" value="Unplaced"/>
</dbReference>
<dbReference type="GO" id="GO:0070531">
    <property type="term" value="C:BRCA1-A complex"/>
    <property type="evidence" value="ECO:0000318"/>
    <property type="project" value="GO_Central"/>
</dbReference>
<dbReference type="GO" id="GO:0031436">
    <property type="term" value="C:BRCA1-BARD1 complex"/>
    <property type="evidence" value="ECO:0000250"/>
    <property type="project" value="UniProtKB"/>
</dbReference>
<dbReference type="GO" id="GO:0005694">
    <property type="term" value="C:chromosome"/>
    <property type="evidence" value="ECO:0000250"/>
    <property type="project" value="UniProtKB"/>
</dbReference>
<dbReference type="GO" id="GO:0005737">
    <property type="term" value="C:cytoplasm"/>
    <property type="evidence" value="ECO:0000250"/>
    <property type="project" value="UniProtKB"/>
</dbReference>
<dbReference type="GO" id="GO:0005634">
    <property type="term" value="C:nucleus"/>
    <property type="evidence" value="ECO:0000250"/>
    <property type="project" value="UniProtKB"/>
</dbReference>
<dbReference type="GO" id="GO:0003677">
    <property type="term" value="F:DNA binding"/>
    <property type="evidence" value="ECO:0007669"/>
    <property type="project" value="UniProtKB-KW"/>
</dbReference>
<dbReference type="GO" id="GO:0070063">
    <property type="term" value="F:RNA polymerase binding"/>
    <property type="evidence" value="ECO:0000250"/>
    <property type="project" value="UniProtKB"/>
</dbReference>
<dbReference type="GO" id="GO:0003713">
    <property type="term" value="F:transcription coactivator activity"/>
    <property type="evidence" value="ECO:0000250"/>
    <property type="project" value="UniProtKB"/>
</dbReference>
<dbReference type="GO" id="GO:0004842">
    <property type="term" value="F:ubiquitin-protein transferase activity"/>
    <property type="evidence" value="ECO:0000250"/>
    <property type="project" value="UniProtKB"/>
</dbReference>
<dbReference type="GO" id="GO:0008270">
    <property type="term" value="F:zinc ion binding"/>
    <property type="evidence" value="ECO:0007669"/>
    <property type="project" value="UniProtKB-KW"/>
</dbReference>
<dbReference type="GO" id="GO:0043009">
    <property type="term" value="P:chordate embryonic development"/>
    <property type="evidence" value="ECO:0000318"/>
    <property type="project" value="GO_Central"/>
</dbReference>
<dbReference type="GO" id="GO:0000724">
    <property type="term" value="P:double-strand break repair via homologous recombination"/>
    <property type="evidence" value="ECO:0000318"/>
    <property type="project" value="GO_Central"/>
</dbReference>
<dbReference type="GO" id="GO:0006633">
    <property type="term" value="P:fatty acid biosynthetic process"/>
    <property type="evidence" value="ECO:0007669"/>
    <property type="project" value="UniProtKB-KW"/>
</dbReference>
<dbReference type="GO" id="GO:0007095">
    <property type="term" value="P:mitotic G2 DNA damage checkpoint signaling"/>
    <property type="evidence" value="ECO:0000318"/>
    <property type="project" value="GO_Central"/>
</dbReference>
<dbReference type="GO" id="GO:0045717">
    <property type="term" value="P:negative regulation of fatty acid biosynthetic process"/>
    <property type="evidence" value="ECO:0000250"/>
    <property type="project" value="UniProtKB"/>
</dbReference>
<dbReference type="GO" id="GO:0045893">
    <property type="term" value="P:positive regulation of DNA-templated transcription"/>
    <property type="evidence" value="ECO:0000250"/>
    <property type="project" value="UniProtKB"/>
</dbReference>
<dbReference type="GO" id="GO:0045944">
    <property type="term" value="P:positive regulation of transcription by RNA polymerase II"/>
    <property type="evidence" value="ECO:0000318"/>
    <property type="project" value="GO_Central"/>
</dbReference>
<dbReference type="GO" id="GO:0051865">
    <property type="term" value="P:protein autoubiquitination"/>
    <property type="evidence" value="ECO:0000250"/>
    <property type="project" value="UniProtKB"/>
</dbReference>
<dbReference type="GO" id="GO:0085020">
    <property type="term" value="P:protein K6-linked ubiquitination"/>
    <property type="evidence" value="ECO:0000250"/>
    <property type="project" value="UniProtKB"/>
</dbReference>
<dbReference type="GO" id="GO:0006357">
    <property type="term" value="P:regulation of transcription by RNA polymerase II"/>
    <property type="evidence" value="ECO:0000250"/>
    <property type="project" value="UniProtKB"/>
</dbReference>
<dbReference type="GO" id="GO:0007549">
    <property type="term" value="P:sex-chromosome dosage compensation"/>
    <property type="evidence" value="ECO:0000318"/>
    <property type="project" value="GO_Central"/>
</dbReference>
<dbReference type="CDD" id="cd17735">
    <property type="entry name" value="BRCT_BRCA1_rpt1"/>
    <property type="match status" value="1"/>
</dbReference>
<dbReference type="CDD" id="cd17721">
    <property type="entry name" value="BRCT_BRCA1_rpt2"/>
    <property type="match status" value="1"/>
</dbReference>
<dbReference type="CDD" id="cd16498">
    <property type="entry name" value="RING-HC_BRCA1"/>
    <property type="match status" value="1"/>
</dbReference>
<dbReference type="FunFam" id="3.30.40.10:FF:000213">
    <property type="entry name" value="Breast cancer type 1 susceptibility protein homolog"/>
    <property type="match status" value="1"/>
</dbReference>
<dbReference type="FunFam" id="3.40.50.10190:FF:000006">
    <property type="entry name" value="Breast cancer type 1 susceptibility protein homolog"/>
    <property type="match status" value="1"/>
</dbReference>
<dbReference type="FunFam" id="3.40.50.10190:FF:000025">
    <property type="entry name" value="Breast cancer type 1 susceptibility protein homolog"/>
    <property type="match status" value="1"/>
</dbReference>
<dbReference type="Gene3D" id="3.40.50.10190">
    <property type="entry name" value="BRCT domain"/>
    <property type="match status" value="2"/>
</dbReference>
<dbReference type="Gene3D" id="3.30.40.10">
    <property type="entry name" value="Zinc/RING finger domain, C3HC4 (zinc finger)"/>
    <property type="match status" value="1"/>
</dbReference>
<dbReference type="InterPro" id="IPR011364">
    <property type="entry name" value="BRCA1"/>
</dbReference>
<dbReference type="InterPro" id="IPR031099">
    <property type="entry name" value="BRCA1-associated"/>
</dbReference>
<dbReference type="InterPro" id="IPR025994">
    <property type="entry name" value="BRCA1_serine_dom"/>
</dbReference>
<dbReference type="InterPro" id="IPR001357">
    <property type="entry name" value="BRCT_dom"/>
</dbReference>
<dbReference type="InterPro" id="IPR036420">
    <property type="entry name" value="BRCT_dom_sf"/>
</dbReference>
<dbReference type="InterPro" id="IPR018957">
    <property type="entry name" value="Znf_C3HC4_RING-type"/>
</dbReference>
<dbReference type="InterPro" id="IPR001841">
    <property type="entry name" value="Znf_RING"/>
</dbReference>
<dbReference type="InterPro" id="IPR013083">
    <property type="entry name" value="Znf_RING/FYVE/PHD"/>
</dbReference>
<dbReference type="InterPro" id="IPR017907">
    <property type="entry name" value="Znf_RING_CS"/>
</dbReference>
<dbReference type="PANTHER" id="PTHR13763:SF0">
    <property type="entry name" value="BREAST CANCER TYPE 1 SUSCEPTIBILITY PROTEIN"/>
    <property type="match status" value="1"/>
</dbReference>
<dbReference type="PANTHER" id="PTHR13763">
    <property type="entry name" value="BREAST CANCER TYPE 1 SUSCEPTIBILITY PROTEIN BRCA1"/>
    <property type="match status" value="1"/>
</dbReference>
<dbReference type="Pfam" id="PF00533">
    <property type="entry name" value="BRCT"/>
    <property type="match status" value="2"/>
</dbReference>
<dbReference type="Pfam" id="PF12820">
    <property type="entry name" value="BRCT_assoc"/>
    <property type="match status" value="1"/>
</dbReference>
<dbReference type="Pfam" id="PF00097">
    <property type="entry name" value="zf-C3HC4"/>
    <property type="match status" value="1"/>
</dbReference>
<dbReference type="PIRSF" id="PIRSF001734">
    <property type="entry name" value="BRCA1"/>
    <property type="match status" value="1"/>
</dbReference>
<dbReference type="PRINTS" id="PR00493">
    <property type="entry name" value="BRSTCANCERI"/>
</dbReference>
<dbReference type="SMART" id="SM00292">
    <property type="entry name" value="BRCT"/>
    <property type="match status" value="2"/>
</dbReference>
<dbReference type="SMART" id="SM00184">
    <property type="entry name" value="RING"/>
    <property type="match status" value="1"/>
</dbReference>
<dbReference type="SUPFAM" id="SSF52113">
    <property type="entry name" value="BRCT domain"/>
    <property type="match status" value="2"/>
</dbReference>
<dbReference type="SUPFAM" id="SSF57850">
    <property type="entry name" value="RING/U-box"/>
    <property type="match status" value="1"/>
</dbReference>
<dbReference type="PROSITE" id="PS50172">
    <property type="entry name" value="BRCT"/>
    <property type="match status" value="2"/>
</dbReference>
<dbReference type="PROSITE" id="PS00518">
    <property type="entry name" value="ZF_RING_1"/>
    <property type="match status" value="1"/>
</dbReference>
<dbReference type="PROSITE" id="PS50089">
    <property type="entry name" value="ZF_RING_2"/>
    <property type="match status" value="1"/>
</dbReference>
<sequence length="1849" mass="206279">MDLSADHVEEVQNVLNAMQKILECPICLELIKEPVSTKCDHIFCKFCMLKLLNQKKGPSQCPLCKNDITKRSLQESTRFSQLVEELLKIIHAFELDTGLQFANSYNFSRKEDNSPEHLKEEVSIIQSMGYRNRAKRLWQSEPENPTLQETSLTVELSNLGIVRSLRTKQQTQSQNKSVYIELGSDSSEDTVNKASYFSVGDHELLEITPQGAKAKTNLNPAEKAACEFSEKDITNTEHHQLSIKDLITTQKHATETHPEKYQGISVSDFHVEPCGTDTHASSLQHENSSLLLTENRLNVEKAEFCNKSKQPVLVKSQQSRWAESKGTCKDRQIPSTEKKIVLNTDPLYRRKELRKQKPACPDSPGDSQDVPWVTLNNSIQKVNDWFSRSDEILTSDDSCDGGSESNNEVAGAVEIPNKVDGYSGSSEKINLMASDPHGTLIHERVHSKPVESNIEDKIFGKTYRRKSSLPNFSHIAEDLILGAFTVEPQITQEQPLTNKLKCKRRGTSGLQPEDFIKKVDLTIVPKTPEKMTEGTDQTEQKCHGMNITSDGHENKTKRDYVQKEQNANPAESLEKESVFRTEAEPISISISNMELELNIHRSKAPKNRLKRKSSTRKIPELELVVSRNPSLPNHTELPIDSSSSNEEMKKKHSSQMPVRQSQKLQLIGDKELTAGAKNNKTYEQINKRLASDAFPELKLTNTPGYFTNCSSKPEEFVHPSLQREENLGTIQVSNSTKDPKDLILREGKALQIERSVESTNISLVPDTDYSTQDSISLLEAKTPEKAKTAPNPCVSLCTATKNLKELIHRDFKDTKNNTEGFQDLLGHDINYVIQETSREMEDSELDTQYLQNTFKASKRQTFALFSNPGNPQKECATVFAHSGSLRDQSPRDPLKCRQKEDSQGKSESKSQHVQAICTTVHFPVADQQDRTPGDDAKCSAKEVTRVCQSSQLRGHKTELVFANKQGVSEKPNLIPSLSPIKSSVKTICKKSPSEKFEEPVTSPEKTLGSESIIQSAVSTISQNNIQESTFKEVSSNSVNEVGSSTNEVGSSVNEVGSSGENIQAEPGRNREPKLRALLGLGLTQPEVYKQSLPVSNCHHPEIKRQGENEDMPQAVKADFSPCLISDNLEQPTGSRHASQVCSETPDNLLNDDEIKENSHFAESDIKERSAVFSESVQKGEFRGSPGPFTHTHLAQGHQRGAGKLESEETVSSEDEELPCFQQLLFGKVTSTLSPSTGCNTVATEGLSKETEGNLESLKSGLNDCSGQVTSAKVSQEHHLNEEARCSGSLFSSQCSAMEDLTTNTNTQDPFLMFERPSKQVYQSESEEVLSDKELVSDDEERETGLEEDSCQEEQSVDSDLGEAVSDHVSETSLSEDGVGLSSQSDILTTQQRDTMQDNLLKLQQEMAELEAVLERHGSQPSHSSASLTADSRGPEHLLNLEQDTSERAILTSEKSRDYSRSQNPESLSADKFPVSLDSSTNKNKEPGMERSSASKFQLSYNRWYMHSSRSLQDRNCPSQKEPINVADMEEQQLAKREAQDLMGSFLPRQDQEGTPYLKSGISLFSHEPESDPSEDRAAEPAHVHSMPPSASALKLSQFRVEESTKNPAAAHIANTTRCNLREESMSKEKPEVISSTERSKKRLSMVASGLTPKELMLVQKFARKHHVTLTNLITEETTHVIMKTDPEFVCERTLKYFLGIAGGKWVVSYFWVTQSIKEGKMLDEHDFEVRGDVVNGRNHQGPKRARESRDKKIFKGLEICCYGPFTNMPTDQLEWMVQLCGASVVKEPSSFTPDQGTHPVVVVQPDAWTEDAGFHVIGQMCEAPVVTREWVLDSVALYQCQELDTYLVP</sequence>
<reference key="1">
    <citation type="journal article" date="2003" name="Oncogene">
        <title>Bovine BRCA1 shows classic responses to genotoxic stress but low in vitro transcriptional activation activity.</title>
        <authorList>
            <person name="Krum S.A."/>
            <person name="Womack J.E."/>
            <person name="Lane T.F."/>
        </authorList>
    </citation>
    <scope>NUCLEOTIDE SEQUENCE [MRNA]</scope>
    <scope>INTERACTION WITH RNA POLYMERASE II</scope>
</reference>
<keyword id="KW-0007">Acetylation</keyword>
<keyword id="KW-0010">Activator</keyword>
<keyword id="KW-0131">Cell cycle</keyword>
<keyword id="KW-0158">Chromosome</keyword>
<keyword id="KW-0963">Cytoplasm</keyword>
<keyword id="KW-0227">DNA damage</keyword>
<keyword id="KW-0233">DNA recombination</keyword>
<keyword id="KW-0234">DNA repair</keyword>
<keyword id="KW-0238">DNA-binding</keyword>
<keyword id="KW-0275">Fatty acid biosynthesis</keyword>
<keyword id="KW-0276">Fatty acid metabolism</keyword>
<keyword id="KW-1017">Isopeptide bond</keyword>
<keyword id="KW-0444">Lipid biosynthesis</keyword>
<keyword id="KW-0443">Lipid metabolism</keyword>
<keyword id="KW-0479">Metal-binding</keyword>
<keyword id="KW-0539">Nucleus</keyword>
<keyword id="KW-0597">Phosphoprotein</keyword>
<keyword id="KW-1185">Reference proteome</keyword>
<keyword id="KW-0677">Repeat</keyword>
<keyword id="KW-0804">Transcription</keyword>
<keyword id="KW-0805">Transcription regulation</keyword>
<keyword id="KW-0808">Transferase</keyword>
<keyword id="KW-0043">Tumor suppressor</keyword>
<keyword id="KW-0832">Ubl conjugation</keyword>
<keyword id="KW-0833">Ubl conjugation pathway</keyword>
<keyword id="KW-0862">Zinc</keyword>
<keyword id="KW-0863">Zinc-finger</keyword>